<geneLocation type="plasmid">
    <name>pIAA1</name>
</geneLocation>
<name>HYIN_PSESS</name>
<feature type="chain" id="PRO_0000105250" description="Indoleacetamide hydrolase">
    <location>
        <begin position="1"/>
        <end position="455"/>
    </location>
</feature>
<feature type="active site" description="Charge relay system" evidence="1">
    <location>
        <position position="71"/>
    </location>
</feature>
<feature type="active site" description="Charge relay system" evidence="1">
    <location>
        <position position="146"/>
    </location>
</feature>
<feature type="active site" description="Acyl-ester intermediate" evidence="1">
    <location>
        <position position="170"/>
    </location>
</feature>
<organism>
    <name type="scientific">Pseudomonas savastanoi</name>
    <name type="common">Pseudomonas syringae pv. savastanoi</name>
    <dbReference type="NCBI Taxonomy" id="29438"/>
    <lineage>
        <taxon>Bacteria</taxon>
        <taxon>Pseudomonadati</taxon>
        <taxon>Pseudomonadota</taxon>
        <taxon>Gammaproteobacteria</taxon>
        <taxon>Pseudomonadales</taxon>
        <taxon>Pseudomonadaceae</taxon>
        <taxon>Pseudomonas</taxon>
    </lineage>
</organism>
<protein>
    <recommendedName>
        <fullName>Indoleacetamide hydrolase</fullName>
        <shortName>IAH</shortName>
        <ecNumber>3.5.1.-</ecNumber>
    </recommendedName>
    <alternativeName>
        <fullName>Indole-3-acetamide hydrolase</fullName>
    </alternativeName>
</protein>
<gene>
    <name type="primary">iaaH</name>
</gene>
<sequence>MHEIITLESLCQALADGEIAAAELRERALDTEARLARLNCFIREGDAVSQFGEADHAMKGTPLWGMPVSFKDNICVRGLPLTAGTRGMSGFVSDQDAAIVSQLRALGAVVAGKNNMHELSFGVTSINPHWGTVGNPVAPGYCAGGSSGGSAAAVASGIVPLSVGTDTGGSIRIPAAFCGITGFRPTTGRWSTAGIIPVSHTKDCVGLLTRTAGDAGFLYGLLSGKQQSFPLSRTAPCRIGLPVSMWSDLDGEVERACVNALSLLRKTGFEFIEIDDADIVELNQTLTFTVPLYEFFADLAQSLLSLGWKHGIHHIFAQVDDANVKGIINHHLGEGAIKPAHYLSSLQNGELLKRKMDELFARHNIELLGYPTVPCRVPHLDHADRPEFFSQAIRNTDLASNAMLPSITIPVGPEGRLPVGLSFDALRGRDALLLSRVSAIEQVLGFVRKVLPHTT</sequence>
<proteinExistence type="inferred from homology"/>
<dbReference type="EC" id="3.5.1.-"/>
<dbReference type="EMBL" id="M11035">
    <property type="protein sequence ID" value="AAA25853.1"/>
    <property type="molecule type" value="Genomic_DNA"/>
</dbReference>
<dbReference type="PIR" id="B25493">
    <property type="entry name" value="B25493"/>
</dbReference>
<dbReference type="RefSeq" id="WP_095178924.1">
    <property type="nucleotide sequence ID" value="NZ_NIAX01000110.1"/>
</dbReference>
<dbReference type="SMR" id="P06618"/>
<dbReference type="KEGG" id="ag:AAA25853"/>
<dbReference type="BioCyc" id="MetaCyc:MONOMER-7681"/>
<dbReference type="UniPathway" id="UPA00151"/>
<dbReference type="PHI-base" id="PHI:4171"/>
<dbReference type="GO" id="GO:0016787">
    <property type="term" value="F:hydrolase activity"/>
    <property type="evidence" value="ECO:0007669"/>
    <property type="project" value="UniProtKB-KW"/>
</dbReference>
<dbReference type="GO" id="GO:0009851">
    <property type="term" value="P:auxin biosynthetic process"/>
    <property type="evidence" value="ECO:0007669"/>
    <property type="project" value="UniProtKB-UniPathway"/>
</dbReference>
<dbReference type="Gene3D" id="3.90.1300.10">
    <property type="entry name" value="Amidase signature (AS) domain"/>
    <property type="match status" value="1"/>
</dbReference>
<dbReference type="InterPro" id="IPR000120">
    <property type="entry name" value="Amidase"/>
</dbReference>
<dbReference type="InterPro" id="IPR020556">
    <property type="entry name" value="Amidase_CS"/>
</dbReference>
<dbReference type="InterPro" id="IPR023631">
    <property type="entry name" value="Amidase_dom"/>
</dbReference>
<dbReference type="InterPro" id="IPR036928">
    <property type="entry name" value="AS_sf"/>
</dbReference>
<dbReference type="PANTHER" id="PTHR11895:SF151">
    <property type="entry name" value="GLUTAMYL-TRNA(GLN) AMIDOTRANSFERASE SUBUNIT A"/>
    <property type="match status" value="1"/>
</dbReference>
<dbReference type="PANTHER" id="PTHR11895">
    <property type="entry name" value="TRANSAMIDASE"/>
    <property type="match status" value="1"/>
</dbReference>
<dbReference type="Pfam" id="PF01425">
    <property type="entry name" value="Amidase"/>
    <property type="match status" value="1"/>
</dbReference>
<dbReference type="SUPFAM" id="SSF75304">
    <property type="entry name" value="Amidase signature (AS) enzymes"/>
    <property type="match status" value="1"/>
</dbReference>
<dbReference type="PROSITE" id="PS00571">
    <property type="entry name" value="AMIDASES"/>
    <property type="match status" value="1"/>
</dbReference>
<evidence type="ECO:0000250" key="1"/>
<evidence type="ECO:0000305" key="2"/>
<comment type="function">
    <text>Hydrolyzes indole-3-acetamide (IAM) into indole-3-acetic acid (IAA).</text>
</comment>
<comment type="pathway">
    <text>Plant hormone metabolism; auxin biosynthesis.</text>
</comment>
<comment type="similarity">
    <text evidence="2">Belongs to the amidase family.</text>
</comment>
<reference key="1">
    <citation type="journal article" date="1985" name="Proc. Natl. Acad. Sci. U.S.A.">
        <title>Nucleotide sequences of the Pseudomonas savastanoi indoleacetic acid genes show homology with Agrobacterium tumefaciens T-DNA.</title>
        <authorList>
            <person name="Yamada T."/>
            <person name="Palm C.J."/>
            <person name="Brooks B."/>
            <person name="Kosuge T."/>
        </authorList>
    </citation>
    <scope>NUCLEOTIDE SEQUENCE [GENOMIC DNA]</scope>
    <source>
        <strain>EW2009</strain>
    </source>
</reference>
<accession>P06618</accession>
<keyword id="KW-0073">Auxin biosynthesis</keyword>
<keyword id="KW-0378">Hydrolase</keyword>
<keyword id="KW-0614">Plasmid</keyword>